<feature type="chain" id="PRO_0000167075" description="Nicotinate-nucleotide--dimethylbenzimidazole phosphoribosyltransferase">
    <location>
        <begin position="1"/>
        <end position="341"/>
    </location>
</feature>
<feature type="active site" description="Proton acceptor" evidence="1">
    <location>
        <position position="310"/>
    </location>
</feature>
<gene>
    <name evidence="1" type="primary">cobT</name>
    <name type="ordered locus">VC_1237</name>
</gene>
<evidence type="ECO:0000255" key="1">
    <source>
        <dbReference type="HAMAP-Rule" id="MF_00230"/>
    </source>
</evidence>
<evidence type="ECO:0000305" key="2"/>
<name>COBT_VIBCH</name>
<keyword id="KW-0169">Cobalamin biosynthesis</keyword>
<keyword id="KW-0328">Glycosyltransferase</keyword>
<keyword id="KW-1185">Reference proteome</keyword>
<keyword id="KW-0808">Transferase</keyword>
<organism>
    <name type="scientific">Vibrio cholerae serotype O1 (strain ATCC 39315 / El Tor Inaba N16961)</name>
    <dbReference type="NCBI Taxonomy" id="243277"/>
    <lineage>
        <taxon>Bacteria</taxon>
        <taxon>Pseudomonadati</taxon>
        <taxon>Pseudomonadota</taxon>
        <taxon>Gammaproteobacteria</taxon>
        <taxon>Vibrionales</taxon>
        <taxon>Vibrionaceae</taxon>
        <taxon>Vibrio</taxon>
    </lineage>
</organism>
<sequence length="341" mass="36084">MLDRSFSAEIQQRIDQKTKPLGALGQLERVAHHLALIQSQNQDQAVTQLAIHQPTVLVFAADHGIAAQGVSIAPSAVTEQMVQNFLAGGAAINCFCRTEHAAMRVIDCGILRAQPAHADLIEQRLGAGTHNLAEQAAMSSEQVQEGIALGKALIHREVESGCNLLMFGEMGIGNTSSAAAILAALSGLPIEVCVGRGTGITDEQYQRKRALVTQGVERCLGAAPQDVLQQVGGFEIVQMVGAFMGAYEKQTPVLVDGFIVTVAAYVATLIEPNVRDFLLFAHCSQETGHRAVLEMLAAEPLLDLGLRLGEGTGAVLALGLVRAAVEFYNHMASFADAGVTV</sequence>
<protein>
    <recommendedName>
        <fullName evidence="1">Nicotinate-nucleotide--dimethylbenzimidazole phosphoribosyltransferase</fullName>
        <shortName evidence="1">NN:DBI PRT</shortName>
        <ecNumber evidence="1">2.4.2.21</ecNumber>
    </recommendedName>
    <alternativeName>
        <fullName evidence="1">N(1)-alpha-phosphoribosyltransferase</fullName>
    </alternativeName>
</protein>
<comment type="function">
    <text evidence="1">Catalyzes the synthesis of alpha-ribazole-5'-phosphate from nicotinate mononucleotide (NAMN) and 5,6-dimethylbenzimidazole (DMB).</text>
</comment>
<comment type="catalytic activity">
    <reaction evidence="1">
        <text>5,6-dimethylbenzimidazole + nicotinate beta-D-ribonucleotide = alpha-ribazole 5'-phosphate + nicotinate + H(+)</text>
        <dbReference type="Rhea" id="RHEA:11196"/>
        <dbReference type="ChEBI" id="CHEBI:15378"/>
        <dbReference type="ChEBI" id="CHEBI:15890"/>
        <dbReference type="ChEBI" id="CHEBI:32544"/>
        <dbReference type="ChEBI" id="CHEBI:57502"/>
        <dbReference type="ChEBI" id="CHEBI:57918"/>
        <dbReference type="EC" id="2.4.2.21"/>
    </reaction>
</comment>
<comment type="pathway">
    <text evidence="1">Nucleoside biosynthesis; alpha-ribazole biosynthesis; alpha-ribazole from 5,6-dimethylbenzimidazole: step 1/2.</text>
</comment>
<comment type="similarity">
    <text evidence="1">Belongs to the CobT family.</text>
</comment>
<comment type="sequence caution" evidence="2">
    <conflict type="erroneous initiation">
        <sequence resource="EMBL-CDS" id="AAF94396"/>
    </conflict>
</comment>
<proteinExistence type="inferred from homology"/>
<accession>Q9KSL9</accession>
<dbReference type="EC" id="2.4.2.21" evidence="1"/>
<dbReference type="EMBL" id="AE003852">
    <property type="protein sequence ID" value="AAF94396.1"/>
    <property type="status" value="ALT_INIT"/>
    <property type="molecule type" value="Genomic_DNA"/>
</dbReference>
<dbReference type="PIR" id="H82223">
    <property type="entry name" value="H82223"/>
</dbReference>
<dbReference type="RefSeq" id="NP_230882.1">
    <property type="nucleotide sequence ID" value="NC_002505.1"/>
</dbReference>
<dbReference type="RefSeq" id="WP_000887084.1">
    <property type="nucleotide sequence ID" value="NZ_LT906614.1"/>
</dbReference>
<dbReference type="SMR" id="Q9KSL9"/>
<dbReference type="STRING" id="243277.VC_1237"/>
<dbReference type="DNASU" id="2614674"/>
<dbReference type="EnsemblBacteria" id="AAF94396">
    <property type="protein sequence ID" value="AAF94396"/>
    <property type="gene ID" value="VC_1237"/>
</dbReference>
<dbReference type="KEGG" id="vch:VC_1237"/>
<dbReference type="PATRIC" id="fig|243277.26.peg.1179"/>
<dbReference type="eggNOG" id="COG2038">
    <property type="taxonomic scope" value="Bacteria"/>
</dbReference>
<dbReference type="HOGENOM" id="CLU_002982_0_0_6"/>
<dbReference type="UniPathway" id="UPA00061">
    <property type="reaction ID" value="UER00516"/>
</dbReference>
<dbReference type="Proteomes" id="UP000000584">
    <property type="component" value="Chromosome 1"/>
</dbReference>
<dbReference type="GO" id="GO:0008939">
    <property type="term" value="F:nicotinate-nucleotide-dimethylbenzimidazole phosphoribosyltransferase activity"/>
    <property type="evidence" value="ECO:0007669"/>
    <property type="project" value="UniProtKB-UniRule"/>
</dbReference>
<dbReference type="GO" id="GO:0009236">
    <property type="term" value="P:cobalamin biosynthetic process"/>
    <property type="evidence" value="ECO:0007669"/>
    <property type="project" value="UniProtKB-KW"/>
</dbReference>
<dbReference type="CDD" id="cd02439">
    <property type="entry name" value="DMB-PRT_CobT"/>
    <property type="match status" value="1"/>
</dbReference>
<dbReference type="FunFam" id="1.10.1610.10:FF:000002">
    <property type="entry name" value="Nicotinate-nucleotide--dimethylbenzimidazole phosphoribosyltransferase"/>
    <property type="match status" value="1"/>
</dbReference>
<dbReference type="FunFam" id="3.40.50.10210:FF:000001">
    <property type="entry name" value="Nicotinate-nucleotide--dimethylbenzimidazole phosphoribosyltransferase"/>
    <property type="match status" value="1"/>
</dbReference>
<dbReference type="Gene3D" id="1.10.1610.10">
    <property type="match status" value="1"/>
</dbReference>
<dbReference type="Gene3D" id="3.40.50.10210">
    <property type="match status" value="1"/>
</dbReference>
<dbReference type="HAMAP" id="MF_00230">
    <property type="entry name" value="CobT"/>
    <property type="match status" value="1"/>
</dbReference>
<dbReference type="InterPro" id="IPR003200">
    <property type="entry name" value="Nict_dMeBzImd_PRibTrfase"/>
</dbReference>
<dbReference type="InterPro" id="IPR017846">
    <property type="entry name" value="Nict_dMeBzImd_PRibTrfase_bact"/>
</dbReference>
<dbReference type="InterPro" id="IPR023195">
    <property type="entry name" value="Nict_dMeBzImd_PRibTrfase_N"/>
</dbReference>
<dbReference type="InterPro" id="IPR036087">
    <property type="entry name" value="Nict_dMeBzImd_PRibTrfase_sf"/>
</dbReference>
<dbReference type="NCBIfam" id="TIGR03160">
    <property type="entry name" value="cobT_DBIPRT"/>
    <property type="match status" value="1"/>
</dbReference>
<dbReference type="NCBIfam" id="NF000996">
    <property type="entry name" value="PRK00105.1"/>
    <property type="match status" value="1"/>
</dbReference>
<dbReference type="PANTHER" id="PTHR43463">
    <property type="entry name" value="NICOTINATE-NUCLEOTIDE--DIMETHYLBENZIMIDAZOLE PHOSPHORIBOSYLTRANSFERASE"/>
    <property type="match status" value="1"/>
</dbReference>
<dbReference type="PANTHER" id="PTHR43463:SF1">
    <property type="entry name" value="NICOTINATE-NUCLEOTIDE--DIMETHYLBENZIMIDAZOLE PHOSPHORIBOSYLTRANSFERASE"/>
    <property type="match status" value="1"/>
</dbReference>
<dbReference type="Pfam" id="PF02277">
    <property type="entry name" value="DBI_PRT"/>
    <property type="match status" value="1"/>
</dbReference>
<dbReference type="SUPFAM" id="SSF52733">
    <property type="entry name" value="Nicotinate mononucleotide:5,6-dimethylbenzimidazole phosphoribosyltransferase (CobT)"/>
    <property type="match status" value="1"/>
</dbReference>
<reference key="1">
    <citation type="journal article" date="2000" name="Nature">
        <title>DNA sequence of both chromosomes of the cholera pathogen Vibrio cholerae.</title>
        <authorList>
            <person name="Heidelberg J.F."/>
            <person name="Eisen J.A."/>
            <person name="Nelson W.C."/>
            <person name="Clayton R.A."/>
            <person name="Gwinn M.L."/>
            <person name="Dodson R.J."/>
            <person name="Haft D.H."/>
            <person name="Hickey E.K."/>
            <person name="Peterson J.D."/>
            <person name="Umayam L.A."/>
            <person name="Gill S.R."/>
            <person name="Nelson K.E."/>
            <person name="Read T.D."/>
            <person name="Tettelin H."/>
            <person name="Richardson D.L."/>
            <person name="Ermolaeva M.D."/>
            <person name="Vamathevan J.J."/>
            <person name="Bass S."/>
            <person name="Qin H."/>
            <person name="Dragoi I."/>
            <person name="Sellers P."/>
            <person name="McDonald L.A."/>
            <person name="Utterback T.R."/>
            <person name="Fleischmann R.D."/>
            <person name="Nierman W.C."/>
            <person name="White O."/>
            <person name="Salzberg S.L."/>
            <person name="Smith H.O."/>
            <person name="Colwell R.R."/>
            <person name="Mekalanos J.J."/>
            <person name="Venter J.C."/>
            <person name="Fraser C.M."/>
        </authorList>
    </citation>
    <scope>NUCLEOTIDE SEQUENCE [LARGE SCALE GENOMIC DNA]</scope>
    <source>
        <strain>ATCC 39315 / El Tor Inaba N16961</strain>
    </source>
</reference>